<keyword id="KW-0002">3D-structure</keyword>
<keyword id="KW-0903">Direct protein sequencing</keyword>
<keyword id="KW-0560">Oxidoreductase</keyword>
<keyword id="KW-1185">Reference proteome</keyword>
<gene>
    <name type="primary">ygiN</name>
    <name type="ordered locus">b3029</name>
    <name type="ordered locus">JW2997</name>
</gene>
<reference key="1">
    <citation type="journal article" date="1995" name="Proc. Natl. Acad. Sci. U.S.A.">
        <title>A general genetic approach in Escherichia coli for determining the mechanism(s) of action of tumoricidal agents: application to DMP 840, a tumoricidal agent.</title>
        <authorList>
            <person name="Chatterjee P.K."/>
            <person name="Sternberg N.L."/>
        </authorList>
    </citation>
    <scope>NUCLEOTIDE SEQUENCE [GENOMIC DNA]</scope>
</reference>
<reference key="2">
    <citation type="journal article" date="1997" name="Science">
        <title>The complete genome sequence of Escherichia coli K-12.</title>
        <authorList>
            <person name="Blattner F.R."/>
            <person name="Plunkett G. III"/>
            <person name="Bloch C.A."/>
            <person name="Perna N.T."/>
            <person name="Burland V."/>
            <person name="Riley M."/>
            <person name="Collado-Vides J."/>
            <person name="Glasner J.D."/>
            <person name="Rode C.K."/>
            <person name="Mayhew G.F."/>
            <person name="Gregor J."/>
            <person name="Davis N.W."/>
            <person name="Kirkpatrick H.A."/>
            <person name="Goeden M.A."/>
            <person name="Rose D.J."/>
            <person name="Mau B."/>
            <person name="Shao Y."/>
        </authorList>
    </citation>
    <scope>NUCLEOTIDE SEQUENCE [LARGE SCALE GENOMIC DNA]</scope>
    <source>
        <strain>K12 / MG1655 / ATCC 47076</strain>
    </source>
</reference>
<reference key="3">
    <citation type="journal article" date="2006" name="Mol. Syst. Biol.">
        <title>Highly accurate genome sequences of Escherichia coli K-12 strains MG1655 and W3110.</title>
        <authorList>
            <person name="Hayashi K."/>
            <person name="Morooka N."/>
            <person name="Yamamoto Y."/>
            <person name="Fujita K."/>
            <person name="Isono K."/>
            <person name="Choi S."/>
            <person name="Ohtsubo E."/>
            <person name="Baba T."/>
            <person name="Wanner B.L."/>
            <person name="Mori H."/>
            <person name="Horiuchi T."/>
        </authorList>
    </citation>
    <scope>NUCLEOTIDE SEQUENCE [LARGE SCALE GENOMIC DNA]</scope>
    <source>
        <strain>K12 / W3110 / ATCC 27325 / DSM 5911</strain>
    </source>
</reference>
<reference key="4">
    <citation type="journal article" date="1998" name="FEMS Microbiol. Lett.">
        <title>Small genes/gene-products in Escherichia coli K-12.</title>
        <authorList>
            <person name="Wasinger V.C."/>
            <person name="Humphery-Smith I."/>
        </authorList>
    </citation>
    <scope>PROTEIN SEQUENCE OF 1-20</scope>
    <source>
        <strain>K12</strain>
    </source>
</reference>
<reference key="5">
    <citation type="journal article" date="1997" name="Electrophoresis">
        <title>Comparing the predicted and observed properties of proteins encoded in the genome of Escherichia coli K-12.</title>
        <authorList>
            <person name="Link A.J."/>
            <person name="Robison K."/>
            <person name="Church G.M."/>
        </authorList>
    </citation>
    <scope>PROTEIN SEQUENCE OF 1-12</scope>
    <source>
        <strain>K12 / EMG2</strain>
    </source>
</reference>
<reference key="6">
    <citation type="journal article" date="1998" name="J. Mol. Biol.">
        <title>Protein identification with N and C-terminal sequence tags in proteome projects.</title>
        <authorList>
            <person name="Wilkins M.R."/>
            <person name="Gasteiger E."/>
            <person name="Tonella L."/>
            <person name="Ou K."/>
            <person name="Tyler M."/>
            <person name="Sanchez J.-C."/>
            <person name="Gooley A.A."/>
            <person name="Walsh B.J."/>
            <person name="Bairoch A."/>
            <person name="Appel R.D."/>
            <person name="Williams K.L."/>
            <person name="Hochstrasser D.F."/>
        </authorList>
    </citation>
    <scope>PROTEIN SEQUENCE OF 1-4</scope>
    <source>
        <strain>K12 / W3110 / ATCC 27325 / DSM 5911</strain>
    </source>
</reference>
<reference key="7">
    <citation type="journal article" date="1999" name="Electrophoresis">
        <title>Enrichment of low abundance proteins of Escherichia coli by hydroxyapatite chromatography.</title>
        <authorList>
            <person name="Fountoulakis M."/>
            <person name="Takacs M.-F."/>
            <person name="Berndt P."/>
            <person name="Langen H."/>
            <person name="Takacs B."/>
        </authorList>
    </citation>
    <scope>IDENTIFICATION BY MASS SPECTROMETRY</scope>
    <source>
        <strain>B / BL21</strain>
    </source>
</reference>
<reference evidence="5 6" key="8">
    <citation type="journal article" date="2005" name="J. Biol. Chem.">
        <title>Structural and biochemical evidence for an enzymatic quinone redox cycle in Escherichia coli: identification of a novel quinol monooxygenase.</title>
        <authorList>
            <person name="Adams M.A."/>
            <person name="Jia Z."/>
        </authorList>
    </citation>
    <scope>X-RAY CRYSTALLOGRAPHY (1.7 ANGSTROMS) OF APOENZYME AND IN COMPLEX WITH MENADIONE</scope>
    <scope>FUNCTION</scope>
    <scope>CATALYTIC ACTIVITY</scope>
    <scope>ACTIVITY REGULATION</scope>
    <scope>SUBUNIT</scope>
</reference>
<accession>P0ADU2</accession>
<accession>P40718</accession>
<accession>Q2M9H1</accession>
<organism>
    <name type="scientific">Escherichia coli (strain K12)</name>
    <dbReference type="NCBI Taxonomy" id="83333"/>
    <lineage>
        <taxon>Bacteria</taxon>
        <taxon>Pseudomonadati</taxon>
        <taxon>Pseudomonadota</taxon>
        <taxon>Gammaproteobacteria</taxon>
        <taxon>Enterobacterales</taxon>
        <taxon>Enterobacteriaceae</taxon>
        <taxon>Escherichia</taxon>
    </lineage>
</organism>
<evidence type="ECO:0000255" key="1">
    <source>
        <dbReference type="PROSITE-ProRule" id="PRU01062"/>
    </source>
</evidence>
<evidence type="ECO:0000269" key="2">
    <source>
    </source>
</evidence>
<evidence type="ECO:0000303" key="3">
    <source>
    </source>
</evidence>
<evidence type="ECO:0000305" key="4"/>
<evidence type="ECO:0007744" key="5">
    <source>
        <dbReference type="PDB" id="1R6Y"/>
    </source>
</evidence>
<evidence type="ECO:0007744" key="6">
    <source>
        <dbReference type="PDB" id="1TUV"/>
    </source>
</evidence>
<evidence type="ECO:0007829" key="7">
    <source>
        <dbReference type="PDB" id="1R6Y"/>
    </source>
</evidence>
<evidence type="ECO:0007829" key="8">
    <source>
        <dbReference type="PDB" id="1TUV"/>
    </source>
</evidence>
<feature type="chain" id="PRO_0000169408" description="Probable quinol monooxygenase YgiN">
    <location>
        <begin position="1"/>
        <end position="104"/>
    </location>
</feature>
<feature type="domain" description="ABM" evidence="1">
    <location>
        <begin position="2"/>
        <end position="100"/>
    </location>
</feature>
<feature type="sequence conflict" description="In Ref. 4; AA sequence." evidence="4" ref="4">
    <location>
        <position position="4"/>
    </location>
</feature>
<feature type="strand" evidence="8">
    <location>
        <begin position="2"/>
        <end position="10"/>
    </location>
</feature>
<feature type="strand" evidence="7">
    <location>
        <begin position="12"/>
        <end position="15"/>
    </location>
</feature>
<feature type="helix" evidence="8">
    <location>
        <begin position="16"/>
        <end position="33"/>
    </location>
</feature>
<feature type="strand" evidence="8">
    <location>
        <begin position="37"/>
        <end position="43"/>
    </location>
</feature>
<feature type="strand" evidence="8">
    <location>
        <begin position="59"/>
        <end position="67"/>
    </location>
</feature>
<feature type="helix" evidence="8">
    <location>
        <begin position="69"/>
        <end position="76"/>
    </location>
</feature>
<feature type="helix" evidence="8">
    <location>
        <begin position="79"/>
        <end position="88"/>
    </location>
</feature>
<feature type="turn" evidence="8">
    <location>
        <begin position="89"/>
        <end position="91"/>
    </location>
</feature>
<feature type="strand" evidence="8">
    <location>
        <begin position="92"/>
        <end position="100"/>
    </location>
</feature>
<comment type="function">
    <text evidence="2">Can oxidize menadiol to menadione (PubMed:15613473). May work in concert with MdaB to form a quinone redox cycle (PubMed:15613473).</text>
</comment>
<comment type="catalytic activity">
    <reaction evidence="2">
        <text>menadiol + 2 O2 = menadione + 2 superoxide + 2 H(+)</text>
        <dbReference type="Rhea" id="RHEA:35611"/>
        <dbReference type="ChEBI" id="CHEBI:6746"/>
        <dbReference type="ChEBI" id="CHEBI:15378"/>
        <dbReference type="ChEBI" id="CHEBI:15379"/>
        <dbReference type="ChEBI" id="CHEBI:18421"/>
        <dbReference type="ChEBI" id="CHEBI:28869"/>
    </reaction>
</comment>
<comment type="activity regulation">
    <text evidence="2">Does not appear to require metal ions or other cofactors for catalysis (PubMed:15613473). The reaction is insensitive to heptyl-4-hydroxyquinoline-N-oxide (HOQNO), a typical inhibitor of single electron reduction reactions (PubMed:15613473).</text>
</comment>
<comment type="subunit">
    <text evidence="2">Homodimer.</text>
</comment>
<name>YGIN_ECOLI</name>
<protein>
    <recommendedName>
        <fullName evidence="4">Probable quinol monooxygenase YgiN</fullName>
        <shortName evidence="3">QuMo</shortName>
        <ecNumber evidence="2">1.-.-.-</ecNumber>
    </recommendedName>
</protein>
<proteinExistence type="evidence at protein level"/>
<dbReference type="EC" id="1.-.-.-" evidence="2"/>
<dbReference type="EMBL" id="U18656">
    <property type="status" value="NOT_ANNOTATED_CDS"/>
    <property type="molecule type" value="Genomic_DNA"/>
</dbReference>
<dbReference type="EMBL" id="U28377">
    <property type="protein sequence ID" value="AAA69197.1"/>
    <property type="molecule type" value="Genomic_DNA"/>
</dbReference>
<dbReference type="EMBL" id="U00096">
    <property type="protein sequence ID" value="AAC76065.1"/>
    <property type="molecule type" value="Genomic_DNA"/>
</dbReference>
<dbReference type="EMBL" id="AP009048">
    <property type="protein sequence ID" value="BAE77085.1"/>
    <property type="molecule type" value="Genomic_DNA"/>
</dbReference>
<dbReference type="PIR" id="C65090">
    <property type="entry name" value="C65090"/>
</dbReference>
<dbReference type="RefSeq" id="NP_417501.1">
    <property type="nucleotide sequence ID" value="NC_000913.3"/>
</dbReference>
<dbReference type="RefSeq" id="WP_000958598.1">
    <property type="nucleotide sequence ID" value="NZ_STEB01000001.1"/>
</dbReference>
<dbReference type="PDB" id="1R6Y">
    <property type="method" value="X-ray"/>
    <property type="resolution" value="2.20 A"/>
    <property type="chains" value="A=1-104"/>
</dbReference>
<dbReference type="PDB" id="1TUV">
    <property type="method" value="X-ray"/>
    <property type="resolution" value="1.70 A"/>
    <property type="chains" value="A=1-104"/>
</dbReference>
<dbReference type="PDBsum" id="1R6Y"/>
<dbReference type="PDBsum" id="1TUV"/>
<dbReference type="SMR" id="P0ADU2"/>
<dbReference type="BioGRID" id="4262392">
    <property type="interactions" value="8"/>
</dbReference>
<dbReference type="FunCoup" id="P0ADU2">
    <property type="interactions" value="19"/>
</dbReference>
<dbReference type="IntAct" id="P0ADU2">
    <property type="interactions" value="2"/>
</dbReference>
<dbReference type="STRING" id="511145.b3029"/>
<dbReference type="jPOST" id="P0ADU2"/>
<dbReference type="PaxDb" id="511145-b3029"/>
<dbReference type="EnsemblBacteria" id="AAC76065">
    <property type="protein sequence ID" value="AAC76065"/>
    <property type="gene ID" value="b3029"/>
</dbReference>
<dbReference type="GeneID" id="947506"/>
<dbReference type="KEGG" id="ecj:JW2997"/>
<dbReference type="KEGG" id="eco:b3029"/>
<dbReference type="KEGG" id="ecoc:C3026_16545"/>
<dbReference type="PATRIC" id="fig|1411691.4.peg.3702"/>
<dbReference type="EchoBASE" id="EB2525"/>
<dbReference type="eggNOG" id="COG1359">
    <property type="taxonomic scope" value="Bacteria"/>
</dbReference>
<dbReference type="HOGENOM" id="CLU_131496_13_1_6"/>
<dbReference type="InParanoid" id="P0ADU2"/>
<dbReference type="OMA" id="HLQTAHM"/>
<dbReference type="OrthoDB" id="9812192at2"/>
<dbReference type="PhylomeDB" id="P0ADU2"/>
<dbReference type="BioCyc" id="EcoCyc:EG12657-MONOMER"/>
<dbReference type="BioCyc" id="MetaCyc:EG12657-MONOMER"/>
<dbReference type="EvolutionaryTrace" id="P0ADU2"/>
<dbReference type="PRO" id="PR:P0ADU2"/>
<dbReference type="Proteomes" id="UP000000625">
    <property type="component" value="Chromosome"/>
</dbReference>
<dbReference type="GO" id="GO:0005829">
    <property type="term" value="C:cytosol"/>
    <property type="evidence" value="ECO:0000314"/>
    <property type="project" value="EcoCyc"/>
</dbReference>
<dbReference type="GO" id="GO:0016491">
    <property type="term" value="F:oxidoreductase activity"/>
    <property type="evidence" value="ECO:0000314"/>
    <property type="project" value="EcoCyc"/>
</dbReference>
<dbReference type="GO" id="GO:0042803">
    <property type="term" value="F:protein homodimerization activity"/>
    <property type="evidence" value="ECO:0000314"/>
    <property type="project" value="EcoCyc"/>
</dbReference>
<dbReference type="GO" id="GO:0010447">
    <property type="term" value="P:response to acidic pH"/>
    <property type="evidence" value="ECO:0000270"/>
    <property type="project" value="EcoCyc"/>
</dbReference>
<dbReference type="FunFam" id="3.30.70.100:FF:000006">
    <property type="entry name" value="Antibiotic biosynthesis monooxygenase"/>
    <property type="match status" value="1"/>
</dbReference>
<dbReference type="Gene3D" id="3.30.70.100">
    <property type="match status" value="1"/>
</dbReference>
<dbReference type="InterPro" id="IPR007138">
    <property type="entry name" value="ABM_dom"/>
</dbReference>
<dbReference type="InterPro" id="IPR050744">
    <property type="entry name" value="AI-2_Isomerase_LsrG"/>
</dbReference>
<dbReference type="InterPro" id="IPR011008">
    <property type="entry name" value="Dimeric_a/b-barrel"/>
</dbReference>
<dbReference type="PANTHER" id="PTHR33336:SF3">
    <property type="entry name" value="ABM DOMAIN-CONTAINING PROTEIN"/>
    <property type="match status" value="1"/>
</dbReference>
<dbReference type="PANTHER" id="PTHR33336">
    <property type="entry name" value="QUINOL MONOOXYGENASE YGIN-RELATED"/>
    <property type="match status" value="1"/>
</dbReference>
<dbReference type="Pfam" id="PF03992">
    <property type="entry name" value="ABM"/>
    <property type="match status" value="1"/>
</dbReference>
<dbReference type="SUPFAM" id="SSF54909">
    <property type="entry name" value="Dimeric alpha+beta barrel"/>
    <property type="match status" value="1"/>
</dbReference>
<dbReference type="PROSITE" id="PS51725">
    <property type="entry name" value="ABM"/>
    <property type="match status" value="1"/>
</dbReference>
<sequence length="104" mass="11532">MLTVIAEIRTRPGQHHRQAVLDQFAKIVPTVLKEEGCHGYAPMVDCAAGVSFQSMAPDSIVMIEQWESIAHLEAHLQTPHMKAYSEAVKGDVLEMNIRILQPGI</sequence>